<evidence type="ECO:0000255" key="1">
    <source>
        <dbReference type="HAMAP-Rule" id="MF_01465"/>
    </source>
</evidence>
<comment type="function">
    <text evidence="1">The central subunit of the protein translocation channel SecYEG. Consists of two halves formed by TMs 1-5 and 6-10. These two domains form a lateral gate at the front which open onto the bilayer between TMs 2 and 7, and are clamped together by SecE at the back. The channel is closed by both a pore ring composed of hydrophobic SecY resides and a short helix (helix 2A) on the extracellular side of the membrane which forms a plug. The plug probably moves laterally to allow the channel to open. The ring and the pore may move independently.</text>
</comment>
<comment type="subunit">
    <text evidence="1">Component of the Sec protein translocase complex. Heterotrimer consisting of SecY, SecE and SecG subunits. The heterotrimers can form oligomers, although 1 heterotrimer is thought to be able to translocate proteins. Interacts with the ribosome. Interacts with SecDF, and other proteins may be involved. Interacts with SecA.</text>
</comment>
<comment type="subcellular location">
    <subcellularLocation>
        <location evidence="1">Cell membrane</location>
        <topology evidence="1">Multi-pass membrane protein</topology>
    </subcellularLocation>
</comment>
<comment type="similarity">
    <text evidence="1">Belongs to the SecY/SEC61-alpha family.</text>
</comment>
<protein>
    <recommendedName>
        <fullName evidence="1">Protein translocase subunit SecY</fullName>
    </recommendedName>
</protein>
<organism>
    <name type="scientific">Streptomyces scabiei</name>
    <dbReference type="NCBI Taxonomy" id="1930"/>
    <lineage>
        <taxon>Bacteria</taxon>
        <taxon>Bacillati</taxon>
        <taxon>Actinomycetota</taxon>
        <taxon>Actinomycetes</taxon>
        <taxon>Kitasatosporales</taxon>
        <taxon>Streptomycetaceae</taxon>
        <taxon>Streptomyces</taxon>
    </lineage>
</organism>
<reference key="1">
    <citation type="journal article" date="1995" name="Gene">
        <title>Cloning and sequencing of a secY homolog from Streptomyces scabies.</title>
        <authorList>
            <person name="Hale V.A."/>
            <person name="O'Brien I."/>
            <person name="Schottel J.L."/>
        </authorList>
    </citation>
    <scope>NUCLEOTIDE SEQUENCE [GENOMIC DNA]</scope>
    <source>
        <strain>FL1</strain>
    </source>
</reference>
<keyword id="KW-1003">Cell membrane</keyword>
<keyword id="KW-0472">Membrane</keyword>
<keyword id="KW-0653">Protein transport</keyword>
<keyword id="KW-0811">Translocation</keyword>
<keyword id="KW-0812">Transmembrane</keyword>
<keyword id="KW-1133">Transmembrane helix</keyword>
<keyword id="KW-0813">Transport</keyword>
<gene>
    <name evidence="1" type="primary">secY</name>
</gene>
<proteinExistence type="inferred from homology"/>
<accession>P43416</accession>
<dbReference type="EMBL" id="U19606">
    <property type="protein sequence ID" value="AAA85555.1"/>
    <property type="molecule type" value="Genomic_DNA"/>
</dbReference>
<dbReference type="PIR" id="JC4288">
    <property type="entry name" value="JC4288"/>
</dbReference>
<dbReference type="RefSeq" id="WP_319362435.1">
    <property type="nucleotide sequence ID" value="NZ_JARAZM010000001.1"/>
</dbReference>
<dbReference type="SMR" id="P43416"/>
<dbReference type="GO" id="GO:0005886">
    <property type="term" value="C:plasma membrane"/>
    <property type="evidence" value="ECO:0007669"/>
    <property type="project" value="UniProtKB-SubCell"/>
</dbReference>
<dbReference type="GO" id="GO:0065002">
    <property type="term" value="P:intracellular protein transmembrane transport"/>
    <property type="evidence" value="ECO:0007669"/>
    <property type="project" value="UniProtKB-UniRule"/>
</dbReference>
<dbReference type="GO" id="GO:0006605">
    <property type="term" value="P:protein targeting"/>
    <property type="evidence" value="ECO:0007669"/>
    <property type="project" value="UniProtKB-UniRule"/>
</dbReference>
<dbReference type="GO" id="GO:0043952">
    <property type="term" value="P:protein transport by the Sec complex"/>
    <property type="evidence" value="ECO:0007669"/>
    <property type="project" value="UniProtKB-UniRule"/>
</dbReference>
<dbReference type="FunFam" id="1.10.3370.10:FF:000001">
    <property type="entry name" value="Preprotein translocase subunit SecY"/>
    <property type="match status" value="1"/>
</dbReference>
<dbReference type="Gene3D" id="1.10.3370.10">
    <property type="entry name" value="SecY subunit domain"/>
    <property type="match status" value="1"/>
</dbReference>
<dbReference type="HAMAP" id="MF_01465">
    <property type="entry name" value="SecY"/>
    <property type="match status" value="1"/>
</dbReference>
<dbReference type="InterPro" id="IPR026593">
    <property type="entry name" value="SecY"/>
</dbReference>
<dbReference type="InterPro" id="IPR002208">
    <property type="entry name" value="SecY/SEC61-alpha"/>
</dbReference>
<dbReference type="InterPro" id="IPR030659">
    <property type="entry name" value="SecY_CS"/>
</dbReference>
<dbReference type="InterPro" id="IPR023201">
    <property type="entry name" value="SecY_dom_sf"/>
</dbReference>
<dbReference type="NCBIfam" id="TIGR00967">
    <property type="entry name" value="3a0501s007"/>
    <property type="match status" value="1"/>
</dbReference>
<dbReference type="PANTHER" id="PTHR10906">
    <property type="entry name" value="SECY/SEC61-ALPHA FAMILY MEMBER"/>
    <property type="match status" value="1"/>
</dbReference>
<dbReference type="Pfam" id="PF00344">
    <property type="entry name" value="SecY"/>
    <property type="match status" value="1"/>
</dbReference>
<dbReference type="PIRSF" id="PIRSF004557">
    <property type="entry name" value="SecY"/>
    <property type="match status" value="1"/>
</dbReference>
<dbReference type="PRINTS" id="PR00303">
    <property type="entry name" value="SECYTRNLCASE"/>
</dbReference>
<dbReference type="SUPFAM" id="SSF103491">
    <property type="entry name" value="Preprotein translocase SecY subunit"/>
    <property type="match status" value="1"/>
</dbReference>
<dbReference type="PROSITE" id="PS00755">
    <property type="entry name" value="SECY_1"/>
    <property type="match status" value="1"/>
</dbReference>
<dbReference type="PROSITE" id="PS00756">
    <property type="entry name" value="SECY_2"/>
    <property type="match status" value="1"/>
</dbReference>
<feature type="chain" id="PRO_0000131754" description="Protein translocase subunit SecY">
    <location>
        <begin position="1"/>
        <end position="437"/>
    </location>
</feature>
<feature type="transmembrane region" description="Helical" evidence="1">
    <location>
        <begin position="19"/>
        <end position="39"/>
    </location>
</feature>
<feature type="transmembrane region" description="Helical" evidence="1">
    <location>
        <begin position="69"/>
        <end position="89"/>
    </location>
</feature>
<feature type="transmembrane region" description="Helical" evidence="1">
    <location>
        <begin position="122"/>
        <end position="142"/>
    </location>
</feature>
<feature type="transmembrane region" description="Helical" evidence="1">
    <location>
        <begin position="157"/>
        <end position="177"/>
    </location>
</feature>
<feature type="transmembrane region" description="Helical" evidence="1">
    <location>
        <begin position="189"/>
        <end position="209"/>
    </location>
</feature>
<feature type="transmembrane region" description="Helical" evidence="1">
    <location>
        <begin position="219"/>
        <end position="239"/>
    </location>
</feature>
<feature type="transmembrane region" description="Helical" evidence="1">
    <location>
        <begin position="275"/>
        <end position="295"/>
    </location>
</feature>
<feature type="transmembrane region" description="Helical" evidence="1">
    <location>
        <begin position="318"/>
        <end position="338"/>
    </location>
</feature>
<feature type="transmembrane region" description="Helical" evidence="1">
    <location>
        <begin position="378"/>
        <end position="398"/>
    </location>
</feature>
<feature type="transmembrane region" description="Helical" evidence="1">
    <location>
        <begin position="400"/>
        <end position="420"/>
    </location>
</feature>
<sequence>MLTAFARAFKTPDLRKKLLFTLGIIVIYRIGTHIPIPGVDYSAVQFCIDQTKSNSGLFGLVNMFSGGALLQITIFALGIMPYITASIILQLLTVVIPRLEALKKEGQSGTAKITQYTRYLTVALAVLQGTGLVATARSGALFSQCPQANNIVPDDSIFTTLTMVVTMTAGTAVVMWLGELITDRGIGNGMSILMFISIAATFPSALWSIKEQGDLAGGWIEFGIVIAVGLVMVALVVFVEQAQRRIPVQYAKRMIGRRSYGGTSTYIPLKVNQAGIIPVIFASSLLYIPALVVQFSGSTAGWAAWIQKNLADTAAPAHITVYFFLIIFFAFFYVAISFNPEEVADNMKKYGGFIPGIRAGRPTAEYLSYVLNRITWPGSLYLGLIALVPTMALAPLGANQNFPFGGTSILIIVGVGLETVKQIESQLQQRNYEGFLR</sequence>
<name>SECY_STRSC</name>